<protein>
    <recommendedName>
        <fullName evidence="1">Large ribosomal subunit protein uL3</fullName>
    </recommendedName>
    <alternativeName>
        <fullName evidence="3">50S ribosomal protein L3</fullName>
    </alternativeName>
</protein>
<comment type="function">
    <text evidence="1">One of the primary rRNA binding proteins, it binds directly near the 3'-end of the 23S rRNA, where it nucleates assembly of the 50S subunit.</text>
</comment>
<comment type="subunit">
    <text evidence="1">Part of the 50S ribosomal subunit. Forms a cluster with proteins L14 and L19.</text>
</comment>
<comment type="similarity">
    <text evidence="1">Belongs to the universal ribosomal protein uL3 family.</text>
</comment>
<gene>
    <name evidence="1" type="primary">rplC</name>
    <name type="ordered locus">LEPBI_I1964</name>
</gene>
<evidence type="ECO:0000255" key="1">
    <source>
        <dbReference type="HAMAP-Rule" id="MF_01325"/>
    </source>
</evidence>
<evidence type="ECO:0000256" key="2">
    <source>
        <dbReference type="SAM" id="MobiDB-lite"/>
    </source>
</evidence>
<evidence type="ECO:0000305" key="3"/>
<accession>B0SSH7</accession>
<reference key="1">
    <citation type="journal article" date="2008" name="PLoS ONE">
        <title>Genome sequence of the saprophyte Leptospira biflexa provides insights into the evolution of Leptospira and the pathogenesis of leptospirosis.</title>
        <authorList>
            <person name="Picardeau M."/>
            <person name="Bulach D.M."/>
            <person name="Bouchier C."/>
            <person name="Zuerner R.L."/>
            <person name="Zidane N."/>
            <person name="Wilson P.J."/>
            <person name="Creno S."/>
            <person name="Kuczek E.S."/>
            <person name="Bommezzadri S."/>
            <person name="Davis J.C."/>
            <person name="McGrath A."/>
            <person name="Johnson M.J."/>
            <person name="Boursaux-Eude C."/>
            <person name="Seemann T."/>
            <person name="Rouy Z."/>
            <person name="Coppel R.L."/>
            <person name="Rood J.I."/>
            <person name="Lajus A."/>
            <person name="Davies J.K."/>
            <person name="Medigue C."/>
            <person name="Adler B."/>
        </authorList>
    </citation>
    <scope>NUCLEOTIDE SEQUENCE [LARGE SCALE GENOMIC DNA]</scope>
    <source>
        <strain>Patoc 1 / ATCC 23582 / Paris</strain>
    </source>
</reference>
<proteinExistence type="inferred from homology"/>
<name>RL3_LEPBP</name>
<feature type="chain" id="PRO_1000141882" description="Large ribosomal subunit protein uL3">
    <location>
        <begin position="1"/>
        <end position="207"/>
    </location>
</feature>
<feature type="region of interest" description="Disordered" evidence="2">
    <location>
        <begin position="129"/>
        <end position="152"/>
    </location>
</feature>
<organism>
    <name type="scientific">Leptospira biflexa serovar Patoc (strain Patoc 1 / ATCC 23582 / Paris)</name>
    <dbReference type="NCBI Taxonomy" id="456481"/>
    <lineage>
        <taxon>Bacteria</taxon>
        <taxon>Pseudomonadati</taxon>
        <taxon>Spirochaetota</taxon>
        <taxon>Spirochaetia</taxon>
        <taxon>Leptospirales</taxon>
        <taxon>Leptospiraceae</taxon>
        <taxon>Leptospira</taxon>
    </lineage>
</organism>
<dbReference type="EMBL" id="CP000786">
    <property type="protein sequence ID" value="ABZ98067.1"/>
    <property type="molecule type" value="Genomic_DNA"/>
</dbReference>
<dbReference type="RefSeq" id="WP_012388940.1">
    <property type="nucleotide sequence ID" value="NC_010602.1"/>
</dbReference>
<dbReference type="SMR" id="B0SSH7"/>
<dbReference type="STRING" id="456481.LEPBI_I1964"/>
<dbReference type="KEGG" id="lbi:LEPBI_I1964"/>
<dbReference type="HOGENOM" id="CLU_044142_4_1_12"/>
<dbReference type="OrthoDB" id="9806135at2"/>
<dbReference type="BioCyc" id="LBIF456481:LEPBI_RS09705-MONOMER"/>
<dbReference type="Proteomes" id="UP000001847">
    <property type="component" value="Chromosome I"/>
</dbReference>
<dbReference type="GO" id="GO:0022625">
    <property type="term" value="C:cytosolic large ribosomal subunit"/>
    <property type="evidence" value="ECO:0007669"/>
    <property type="project" value="TreeGrafter"/>
</dbReference>
<dbReference type="GO" id="GO:0019843">
    <property type="term" value="F:rRNA binding"/>
    <property type="evidence" value="ECO:0007669"/>
    <property type="project" value="UniProtKB-UniRule"/>
</dbReference>
<dbReference type="GO" id="GO:0003735">
    <property type="term" value="F:structural constituent of ribosome"/>
    <property type="evidence" value="ECO:0007669"/>
    <property type="project" value="InterPro"/>
</dbReference>
<dbReference type="GO" id="GO:0006412">
    <property type="term" value="P:translation"/>
    <property type="evidence" value="ECO:0007669"/>
    <property type="project" value="UniProtKB-UniRule"/>
</dbReference>
<dbReference type="FunFam" id="2.40.30.10:FF:000004">
    <property type="entry name" value="50S ribosomal protein L3"/>
    <property type="match status" value="1"/>
</dbReference>
<dbReference type="FunFam" id="3.30.160.810:FF:000001">
    <property type="entry name" value="50S ribosomal protein L3"/>
    <property type="match status" value="1"/>
</dbReference>
<dbReference type="Gene3D" id="3.30.160.810">
    <property type="match status" value="1"/>
</dbReference>
<dbReference type="Gene3D" id="2.40.30.10">
    <property type="entry name" value="Translation factors"/>
    <property type="match status" value="1"/>
</dbReference>
<dbReference type="HAMAP" id="MF_01325_B">
    <property type="entry name" value="Ribosomal_uL3_B"/>
    <property type="match status" value="1"/>
</dbReference>
<dbReference type="InterPro" id="IPR000597">
    <property type="entry name" value="Ribosomal_uL3"/>
</dbReference>
<dbReference type="InterPro" id="IPR019927">
    <property type="entry name" value="Ribosomal_uL3_bac/org-type"/>
</dbReference>
<dbReference type="InterPro" id="IPR009000">
    <property type="entry name" value="Transl_B-barrel_sf"/>
</dbReference>
<dbReference type="NCBIfam" id="TIGR03625">
    <property type="entry name" value="L3_bact"/>
    <property type="match status" value="1"/>
</dbReference>
<dbReference type="PANTHER" id="PTHR11229">
    <property type="entry name" value="50S RIBOSOMAL PROTEIN L3"/>
    <property type="match status" value="1"/>
</dbReference>
<dbReference type="PANTHER" id="PTHR11229:SF16">
    <property type="entry name" value="LARGE RIBOSOMAL SUBUNIT PROTEIN UL3C"/>
    <property type="match status" value="1"/>
</dbReference>
<dbReference type="Pfam" id="PF00297">
    <property type="entry name" value="Ribosomal_L3"/>
    <property type="match status" value="1"/>
</dbReference>
<dbReference type="SUPFAM" id="SSF50447">
    <property type="entry name" value="Translation proteins"/>
    <property type="match status" value="1"/>
</dbReference>
<sequence length="207" mass="21809">MAKGLIGEKLGMAHIFNNDGKMVTVTVLRVGPCFVSQVKTEANDGYEAVQLAFGDAKEKHLTKAELGHIKKANIATPKKTLVEFKGFEGVAVGSEVKLADIFALDDTVKVTGTSKGKGTQGVVKRHGFAGGPAGHGSRFQRHPGSIGSNTTPGRVFKGLKMGGRMGSEQTTVRNLKVVKIDADANLVFVSGPVPGRERGIVTIEKIG</sequence>
<keyword id="KW-1185">Reference proteome</keyword>
<keyword id="KW-0687">Ribonucleoprotein</keyword>
<keyword id="KW-0689">Ribosomal protein</keyword>
<keyword id="KW-0694">RNA-binding</keyword>
<keyword id="KW-0699">rRNA-binding</keyword>